<sequence>MPAALQDHFFQRDAQVLARDLLGKVIRHKVGELWLAARIIETEAYYCAEKGSHASLGYTEKRKALFLEGGHIYMYYARGGDSLNFSAEGPGNAVLIKSAFPWTDATSDENALAQMQLNNPDASGAIRPPQRLCAGQTLLCKALGLKVPAWDAKRFDPQRLLVEDVGQTPERIIQTTRLGIPSGRDEHLMYRFVDAGYARFCTRNPLRRGQVEGRDYLFLDQGN</sequence>
<dbReference type="EC" id="3.2.2.-" evidence="1"/>
<dbReference type="EMBL" id="AE016853">
    <property type="protein sequence ID" value="AAO58259.1"/>
    <property type="molecule type" value="Genomic_DNA"/>
</dbReference>
<dbReference type="RefSeq" id="NP_794564.1">
    <property type="nucleotide sequence ID" value="NC_004578.1"/>
</dbReference>
<dbReference type="RefSeq" id="WP_005763225.1">
    <property type="nucleotide sequence ID" value="NC_004578.1"/>
</dbReference>
<dbReference type="SMR" id="Q87VV5"/>
<dbReference type="STRING" id="223283.PSPTO_4830"/>
<dbReference type="GeneID" id="1186513"/>
<dbReference type="KEGG" id="pst:PSPTO_4830"/>
<dbReference type="PATRIC" id="fig|223283.9.peg.4942"/>
<dbReference type="eggNOG" id="COG2094">
    <property type="taxonomic scope" value="Bacteria"/>
</dbReference>
<dbReference type="HOGENOM" id="CLU_104187_0_0_6"/>
<dbReference type="OrthoDB" id="9794313at2"/>
<dbReference type="PhylomeDB" id="Q87VV5"/>
<dbReference type="Proteomes" id="UP000002515">
    <property type="component" value="Chromosome"/>
</dbReference>
<dbReference type="GO" id="GO:0003905">
    <property type="term" value="F:alkylbase DNA N-glycosylase activity"/>
    <property type="evidence" value="ECO:0007669"/>
    <property type="project" value="InterPro"/>
</dbReference>
<dbReference type="GO" id="GO:0003677">
    <property type="term" value="F:DNA binding"/>
    <property type="evidence" value="ECO:0007669"/>
    <property type="project" value="InterPro"/>
</dbReference>
<dbReference type="GO" id="GO:0006284">
    <property type="term" value="P:base-excision repair"/>
    <property type="evidence" value="ECO:0007669"/>
    <property type="project" value="InterPro"/>
</dbReference>
<dbReference type="CDD" id="cd00540">
    <property type="entry name" value="AAG"/>
    <property type="match status" value="1"/>
</dbReference>
<dbReference type="Gene3D" id="3.10.300.10">
    <property type="entry name" value="Methylpurine-DNA glycosylase (MPG)"/>
    <property type="match status" value="1"/>
</dbReference>
<dbReference type="HAMAP" id="MF_00527">
    <property type="entry name" value="3MGH"/>
    <property type="match status" value="1"/>
</dbReference>
<dbReference type="InterPro" id="IPR011034">
    <property type="entry name" value="Formyl_transferase-like_C_sf"/>
</dbReference>
<dbReference type="InterPro" id="IPR003180">
    <property type="entry name" value="MPG"/>
</dbReference>
<dbReference type="InterPro" id="IPR036995">
    <property type="entry name" value="MPG_sf"/>
</dbReference>
<dbReference type="NCBIfam" id="NF002005">
    <property type="entry name" value="PRK00802.1-5"/>
    <property type="match status" value="1"/>
</dbReference>
<dbReference type="PANTHER" id="PTHR10429">
    <property type="entry name" value="DNA-3-METHYLADENINE GLYCOSYLASE"/>
    <property type="match status" value="1"/>
</dbReference>
<dbReference type="PANTHER" id="PTHR10429:SF0">
    <property type="entry name" value="DNA-3-METHYLADENINE GLYCOSYLASE"/>
    <property type="match status" value="1"/>
</dbReference>
<dbReference type="Pfam" id="PF02245">
    <property type="entry name" value="Pur_DNA_glyco"/>
    <property type="match status" value="1"/>
</dbReference>
<dbReference type="SUPFAM" id="SSF50486">
    <property type="entry name" value="FMT C-terminal domain-like"/>
    <property type="match status" value="1"/>
</dbReference>
<protein>
    <recommendedName>
        <fullName evidence="1">Putative 3-methyladenine DNA glycosylase</fullName>
        <ecNumber evidence="1">3.2.2.-</ecNumber>
    </recommendedName>
</protein>
<comment type="similarity">
    <text evidence="1">Belongs to the DNA glycosylase MPG family.</text>
</comment>
<feature type="chain" id="PRO_1000191301" description="Putative 3-methyladenine DNA glycosylase">
    <location>
        <begin position="1"/>
        <end position="223"/>
    </location>
</feature>
<name>3MGH_PSESM</name>
<accession>Q87VV5</accession>
<keyword id="KW-0227">DNA damage</keyword>
<keyword id="KW-0234">DNA repair</keyword>
<keyword id="KW-0378">Hydrolase</keyword>
<keyword id="KW-1185">Reference proteome</keyword>
<evidence type="ECO:0000255" key="1">
    <source>
        <dbReference type="HAMAP-Rule" id="MF_00527"/>
    </source>
</evidence>
<proteinExistence type="inferred from homology"/>
<reference key="1">
    <citation type="journal article" date="2003" name="Proc. Natl. Acad. Sci. U.S.A.">
        <title>The complete genome sequence of the Arabidopsis and tomato pathogen Pseudomonas syringae pv. tomato DC3000.</title>
        <authorList>
            <person name="Buell C.R."/>
            <person name="Joardar V."/>
            <person name="Lindeberg M."/>
            <person name="Selengut J."/>
            <person name="Paulsen I.T."/>
            <person name="Gwinn M.L."/>
            <person name="Dodson R.J."/>
            <person name="DeBoy R.T."/>
            <person name="Durkin A.S."/>
            <person name="Kolonay J.F."/>
            <person name="Madupu R."/>
            <person name="Daugherty S.C."/>
            <person name="Brinkac L.M."/>
            <person name="Beanan M.J."/>
            <person name="Haft D.H."/>
            <person name="Nelson W.C."/>
            <person name="Davidsen T.M."/>
            <person name="Zafar N."/>
            <person name="Zhou L."/>
            <person name="Liu J."/>
            <person name="Yuan Q."/>
            <person name="Khouri H.M."/>
            <person name="Fedorova N.B."/>
            <person name="Tran B."/>
            <person name="Russell D."/>
            <person name="Berry K.J."/>
            <person name="Utterback T.R."/>
            <person name="Van Aken S.E."/>
            <person name="Feldblyum T.V."/>
            <person name="D'Ascenzo M."/>
            <person name="Deng W.-L."/>
            <person name="Ramos A.R."/>
            <person name="Alfano J.R."/>
            <person name="Cartinhour S."/>
            <person name="Chatterjee A.K."/>
            <person name="Delaney T.P."/>
            <person name="Lazarowitz S.G."/>
            <person name="Martin G.B."/>
            <person name="Schneider D.J."/>
            <person name="Tang X."/>
            <person name="Bender C.L."/>
            <person name="White O."/>
            <person name="Fraser C.M."/>
            <person name="Collmer A."/>
        </authorList>
    </citation>
    <scope>NUCLEOTIDE SEQUENCE [LARGE SCALE GENOMIC DNA]</scope>
    <source>
        <strain>ATCC BAA-871 / DC3000</strain>
    </source>
</reference>
<organism>
    <name type="scientific">Pseudomonas syringae pv. tomato (strain ATCC BAA-871 / DC3000)</name>
    <dbReference type="NCBI Taxonomy" id="223283"/>
    <lineage>
        <taxon>Bacteria</taxon>
        <taxon>Pseudomonadati</taxon>
        <taxon>Pseudomonadota</taxon>
        <taxon>Gammaproteobacteria</taxon>
        <taxon>Pseudomonadales</taxon>
        <taxon>Pseudomonadaceae</taxon>
        <taxon>Pseudomonas</taxon>
    </lineage>
</organism>
<gene>
    <name type="ordered locus">PSPTO_4830</name>
    <name type="ORF">PSPTO4830</name>
</gene>